<accession>Q08AY6</accession>
<sequence length="335" mass="38092">MGRGKKMSKPGDGRSGDVSDTGRNGGTNENHPKTNGEVVHCGQAKIYSYMSPTKSPSARPPLQEENSVTHHESKCLGKPSTETRKKAEVEKKKILSTELSVKPSEQRETECNSIGEFLEPKLELNDVQRNLALPPEDKLQSQKMVKNKPLRKKTQRQKSPNRKLTDYYPVRRSSRKNKTEIESEEKKRIDELIQTGKEEGIKMHMITGKGRGVIATRDFQRGEFVVEYHGDLIEITDAKRREASYAQDSATGCYMYYFQYLNTSYCIDATRETGRLGRLINHSKSGNCHTKLHNINNVPHLILVASRDINVGEELLYDYGDRRKSSIDAHPWLKN</sequence>
<keyword id="KW-0131">Cell cycle</keyword>
<keyword id="KW-0132">Cell division</keyword>
<keyword id="KW-0156">Chromatin regulator</keyword>
<keyword id="KW-0158">Chromosome</keyword>
<keyword id="KW-0489">Methyltransferase</keyword>
<keyword id="KW-0498">Mitosis</keyword>
<keyword id="KW-0539">Nucleus</keyword>
<keyword id="KW-1185">Reference proteome</keyword>
<keyword id="KW-0678">Repressor</keyword>
<keyword id="KW-0949">S-adenosyl-L-methionine</keyword>
<keyword id="KW-0804">Transcription</keyword>
<keyword id="KW-0805">Transcription regulation</keyword>
<keyword id="KW-0808">Transferase</keyword>
<name>KT5AA_XENLA</name>
<evidence type="ECO:0000250" key="1">
    <source>
        <dbReference type="UniProtKB" id="Q9NQR1"/>
    </source>
</evidence>
<evidence type="ECO:0000255" key="2">
    <source>
        <dbReference type="PROSITE-ProRule" id="PRU00190"/>
    </source>
</evidence>
<evidence type="ECO:0000255" key="3">
    <source>
        <dbReference type="PROSITE-ProRule" id="PRU00904"/>
    </source>
</evidence>
<evidence type="ECO:0000256" key="4">
    <source>
        <dbReference type="SAM" id="MobiDB-lite"/>
    </source>
</evidence>
<evidence type="ECO:0000305" key="5"/>
<reference key="1">
    <citation type="submission" date="2006-10" db="EMBL/GenBank/DDBJ databases">
        <authorList>
            <consortium name="NIH - Xenopus Gene Collection (XGC) project"/>
        </authorList>
    </citation>
    <scope>NUCLEOTIDE SEQUENCE [LARGE SCALE MRNA]</scope>
    <source>
        <tissue>Ovary</tissue>
    </source>
</reference>
<comment type="function">
    <text evidence="1">Protein-lysine N-methyltransferase that monomethylates both histones and non-histone proteins. Specifically monomethylates 'Lys-20' of histone H4 (H4K20me1). H4K20me1 is enriched during mitosis and represents a specific tag for epigenetic transcriptional repression. Mainly functions in euchromatin regions, thereby playing a central role in the silencing of euchromatic genes. Required for cell proliferation, probably by contributing to the maintenance of proper higher-order structure of DNA during mitosis. Involved in chromosome condensation and proper cytokinesis.</text>
</comment>
<comment type="catalytic activity">
    <reaction evidence="1 3">
        <text>L-lysyl(20)-[histone H4] + S-adenosyl-L-methionine = N(6)-methyl-L-lysyl(20)-[histone H4] + S-adenosyl-L-homocysteine + H(+)</text>
        <dbReference type="Rhea" id="RHEA:60344"/>
        <dbReference type="Rhea" id="RHEA-COMP:15554"/>
        <dbReference type="Rhea" id="RHEA-COMP:15555"/>
        <dbReference type="ChEBI" id="CHEBI:15378"/>
        <dbReference type="ChEBI" id="CHEBI:29969"/>
        <dbReference type="ChEBI" id="CHEBI:57856"/>
        <dbReference type="ChEBI" id="CHEBI:59789"/>
        <dbReference type="ChEBI" id="CHEBI:61929"/>
        <dbReference type="EC" id="2.1.1.361"/>
    </reaction>
</comment>
<comment type="catalytic activity">
    <reaction evidence="1">
        <text>L-lysyl-[protein] + S-adenosyl-L-methionine = N(6)-methyl-L-lysyl-[protein] + S-adenosyl-L-homocysteine + H(+)</text>
        <dbReference type="Rhea" id="RHEA:51736"/>
        <dbReference type="Rhea" id="RHEA-COMP:9752"/>
        <dbReference type="Rhea" id="RHEA-COMP:13053"/>
        <dbReference type="ChEBI" id="CHEBI:15378"/>
        <dbReference type="ChEBI" id="CHEBI:29969"/>
        <dbReference type="ChEBI" id="CHEBI:57856"/>
        <dbReference type="ChEBI" id="CHEBI:59789"/>
        <dbReference type="ChEBI" id="CHEBI:61929"/>
    </reaction>
</comment>
<comment type="subcellular location">
    <subcellularLocation>
        <location evidence="1">Nucleus</location>
    </subcellularLocation>
    <subcellularLocation>
        <location evidence="1">Chromosome</location>
    </subcellularLocation>
    <text evidence="1">Specifically localizes to mitotic chromosomes. Associates with silent chromatin on euchromatic arms (By similarity).</text>
</comment>
<comment type="similarity">
    <text evidence="3">Belongs to the class V-like SAM-binding methyltransferase superfamily. Histone-lysine methyltransferase family. PR/SET subfamily.</text>
</comment>
<dbReference type="EC" id="2.1.1.-" evidence="1"/>
<dbReference type="EC" id="2.1.1.361" evidence="1"/>
<dbReference type="EMBL" id="BC124952">
    <property type="protein sequence ID" value="AAI24953.1"/>
    <property type="molecule type" value="mRNA"/>
</dbReference>
<dbReference type="RefSeq" id="NP_001121300.1">
    <property type="nucleotide sequence ID" value="NM_001127828.1"/>
</dbReference>
<dbReference type="SMR" id="Q08AY6"/>
<dbReference type="DNASU" id="100158384"/>
<dbReference type="GeneID" id="100158384"/>
<dbReference type="KEGG" id="xla:100158384"/>
<dbReference type="AGR" id="Xenbase:XB-GENE-865841"/>
<dbReference type="CTD" id="100158384"/>
<dbReference type="Xenbase" id="XB-GENE-865841">
    <property type="gene designation" value="kmt5a.S"/>
</dbReference>
<dbReference type="OMA" id="THHESKC"/>
<dbReference type="OrthoDB" id="5560686at2759"/>
<dbReference type="Proteomes" id="UP000186698">
    <property type="component" value="Chromosome 1S"/>
</dbReference>
<dbReference type="Bgee" id="100158384">
    <property type="expression patterns" value="Expressed in gastrula and 19 other cell types or tissues"/>
</dbReference>
<dbReference type="GO" id="GO:0005634">
    <property type="term" value="C:nucleus"/>
    <property type="evidence" value="ECO:0000318"/>
    <property type="project" value="GO_Central"/>
</dbReference>
<dbReference type="GO" id="GO:0005700">
    <property type="term" value="C:polytene chromosome"/>
    <property type="evidence" value="ECO:0000318"/>
    <property type="project" value="GO_Central"/>
</dbReference>
<dbReference type="GO" id="GO:0042799">
    <property type="term" value="F:histone H4K20 methyltransferase activity"/>
    <property type="evidence" value="ECO:0000318"/>
    <property type="project" value="GO_Central"/>
</dbReference>
<dbReference type="GO" id="GO:0140944">
    <property type="term" value="F:histone H4K20 monomethyltransferase activity"/>
    <property type="evidence" value="ECO:0007669"/>
    <property type="project" value="UniProtKB-EC"/>
</dbReference>
<dbReference type="GO" id="GO:0042054">
    <property type="term" value="F:histone methyltransferase activity"/>
    <property type="evidence" value="ECO:0000250"/>
    <property type="project" value="UniProtKB"/>
</dbReference>
<dbReference type="GO" id="GO:0051301">
    <property type="term" value="P:cell division"/>
    <property type="evidence" value="ECO:0007669"/>
    <property type="project" value="UniProtKB-KW"/>
</dbReference>
<dbReference type="GO" id="GO:0032259">
    <property type="term" value="P:methylation"/>
    <property type="evidence" value="ECO:0007669"/>
    <property type="project" value="UniProtKB-KW"/>
</dbReference>
<dbReference type="GO" id="GO:0043516">
    <property type="term" value="P:regulation of DNA damage response, signal transduction by p53 class mediator"/>
    <property type="evidence" value="ECO:0000318"/>
    <property type="project" value="GO_Central"/>
</dbReference>
<dbReference type="GO" id="GO:0006357">
    <property type="term" value="P:regulation of transcription by RNA polymerase II"/>
    <property type="evidence" value="ECO:0000318"/>
    <property type="project" value="GO_Central"/>
</dbReference>
<dbReference type="CDD" id="cd10528">
    <property type="entry name" value="SET_SETD8"/>
    <property type="match status" value="1"/>
</dbReference>
<dbReference type="FunFam" id="2.170.270.10:FF:000021">
    <property type="entry name" value="Histone-lysine N-methyltransferase"/>
    <property type="match status" value="1"/>
</dbReference>
<dbReference type="Gene3D" id="2.170.270.10">
    <property type="entry name" value="SET domain"/>
    <property type="match status" value="1"/>
</dbReference>
<dbReference type="InterPro" id="IPR051760">
    <property type="entry name" value="KMT5A"/>
</dbReference>
<dbReference type="InterPro" id="IPR016858">
    <property type="entry name" value="KMT5A-like"/>
</dbReference>
<dbReference type="InterPro" id="IPR047266">
    <property type="entry name" value="KMT5A-like_SET"/>
</dbReference>
<dbReference type="InterPro" id="IPR001214">
    <property type="entry name" value="SET_dom"/>
</dbReference>
<dbReference type="InterPro" id="IPR046341">
    <property type="entry name" value="SET_dom_sf"/>
</dbReference>
<dbReference type="PANTHER" id="PTHR46167">
    <property type="entry name" value="N-LYSINE METHYLTRANSFERASE KMT5A"/>
    <property type="match status" value="1"/>
</dbReference>
<dbReference type="PANTHER" id="PTHR46167:SF1">
    <property type="entry name" value="N-LYSINE METHYLTRANSFERASE KMT5A"/>
    <property type="match status" value="1"/>
</dbReference>
<dbReference type="Pfam" id="PF00856">
    <property type="entry name" value="SET"/>
    <property type="match status" value="1"/>
</dbReference>
<dbReference type="PIRSF" id="PIRSF027717">
    <property type="entry name" value="Histone_H4-K20_mtfrase"/>
    <property type="match status" value="1"/>
</dbReference>
<dbReference type="SMART" id="SM00317">
    <property type="entry name" value="SET"/>
    <property type="match status" value="1"/>
</dbReference>
<dbReference type="SUPFAM" id="SSF82199">
    <property type="entry name" value="SET domain"/>
    <property type="match status" value="1"/>
</dbReference>
<dbReference type="PROSITE" id="PS51571">
    <property type="entry name" value="SAM_MT43_PR_SET"/>
    <property type="match status" value="1"/>
</dbReference>
<dbReference type="PROSITE" id="PS50280">
    <property type="entry name" value="SET"/>
    <property type="match status" value="1"/>
</dbReference>
<feature type="chain" id="PRO_0000317000" description="N-lysine methyltransferase KMT5A-A">
    <location>
        <begin position="1"/>
        <end position="335"/>
    </location>
</feature>
<feature type="domain" description="SET" evidence="2">
    <location>
        <begin position="199"/>
        <end position="320"/>
    </location>
</feature>
<feature type="region of interest" description="Disordered" evidence="4">
    <location>
        <begin position="1"/>
        <end position="91"/>
    </location>
</feature>
<feature type="region of interest" description="Disordered" evidence="4">
    <location>
        <begin position="133"/>
        <end position="183"/>
    </location>
</feature>
<feature type="compositionally biased region" description="Basic and acidic residues" evidence="4">
    <location>
        <begin position="67"/>
        <end position="91"/>
    </location>
</feature>
<feature type="compositionally biased region" description="Basic residues" evidence="4">
    <location>
        <begin position="145"/>
        <end position="161"/>
    </location>
</feature>
<feature type="binding site" evidence="3">
    <location>
        <begin position="209"/>
        <end position="211"/>
    </location>
    <ligand>
        <name>S-adenosyl-L-methionine</name>
        <dbReference type="ChEBI" id="CHEBI:59789"/>
    </ligand>
</feature>
<feature type="binding site" evidence="2 3">
    <location>
        <position position="254"/>
    </location>
    <ligand>
        <name>S-adenosyl-L-methionine</name>
        <dbReference type="ChEBI" id="CHEBI:59789"/>
    </ligand>
</feature>
<feature type="binding site" evidence="3">
    <location>
        <begin position="281"/>
        <end position="282"/>
    </location>
    <ligand>
        <name>S-adenosyl-L-methionine</name>
        <dbReference type="ChEBI" id="CHEBI:59789"/>
    </ligand>
</feature>
<organism>
    <name type="scientific">Xenopus laevis</name>
    <name type="common">African clawed frog</name>
    <dbReference type="NCBI Taxonomy" id="8355"/>
    <lineage>
        <taxon>Eukaryota</taxon>
        <taxon>Metazoa</taxon>
        <taxon>Chordata</taxon>
        <taxon>Craniata</taxon>
        <taxon>Vertebrata</taxon>
        <taxon>Euteleostomi</taxon>
        <taxon>Amphibia</taxon>
        <taxon>Batrachia</taxon>
        <taxon>Anura</taxon>
        <taxon>Pipoidea</taxon>
        <taxon>Pipidae</taxon>
        <taxon>Xenopodinae</taxon>
        <taxon>Xenopus</taxon>
        <taxon>Xenopus</taxon>
    </lineage>
</organism>
<protein>
    <recommendedName>
        <fullName evidence="5">N-lysine methyltransferase KMT5A-A</fullName>
        <ecNumber evidence="1">2.1.1.-</ecNumber>
    </recommendedName>
    <alternativeName>
        <fullName>Histone-lysine N-methyltransferase KMT5A-A</fullName>
        <ecNumber evidence="1">2.1.1.361</ecNumber>
    </alternativeName>
    <alternativeName>
        <fullName evidence="1">Lysine-specific methylase 5A-A</fullName>
    </alternativeName>
    <alternativeName>
        <fullName>SET domain-containing protein 8-A</fullName>
    </alternativeName>
</protein>
<proteinExistence type="evidence at transcript level"/>
<gene>
    <name evidence="1" type="primary">kmt5a-a</name>
    <name type="synonym">setd8-a</name>
</gene>